<name>HEM6_SHEWM</name>
<dbReference type="EC" id="1.3.3.3" evidence="1"/>
<dbReference type="EMBL" id="CP000961">
    <property type="protein sequence ID" value="ACA84346.1"/>
    <property type="molecule type" value="Genomic_DNA"/>
</dbReference>
<dbReference type="RefSeq" id="WP_012322695.1">
    <property type="nucleotide sequence ID" value="NC_010506.1"/>
</dbReference>
<dbReference type="SMR" id="B1KCX1"/>
<dbReference type="STRING" id="392500.Swoo_0045"/>
<dbReference type="KEGG" id="swd:Swoo_0045"/>
<dbReference type="eggNOG" id="COG0408">
    <property type="taxonomic scope" value="Bacteria"/>
</dbReference>
<dbReference type="HOGENOM" id="CLU_026169_0_1_6"/>
<dbReference type="UniPathway" id="UPA00251">
    <property type="reaction ID" value="UER00322"/>
</dbReference>
<dbReference type="Proteomes" id="UP000002168">
    <property type="component" value="Chromosome"/>
</dbReference>
<dbReference type="GO" id="GO:0005737">
    <property type="term" value="C:cytoplasm"/>
    <property type="evidence" value="ECO:0007669"/>
    <property type="project" value="UniProtKB-SubCell"/>
</dbReference>
<dbReference type="GO" id="GO:0004109">
    <property type="term" value="F:coproporphyrinogen oxidase activity"/>
    <property type="evidence" value="ECO:0007669"/>
    <property type="project" value="UniProtKB-UniRule"/>
</dbReference>
<dbReference type="GO" id="GO:0046872">
    <property type="term" value="F:metal ion binding"/>
    <property type="evidence" value="ECO:0007669"/>
    <property type="project" value="UniProtKB-KW"/>
</dbReference>
<dbReference type="GO" id="GO:0042803">
    <property type="term" value="F:protein homodimerization activity"/>
    <property type="evidence" value="ECO:0000250"/>
    <property type="project" value="UniProtKB"/>
</dbReference>
<dbReference type="GO" id="GO:0006782">
    <property type="term" value="P:protoporphyrinogen IX biosynthetic process"/>
    <property type="evidence" value="ECO:0007669"/>
    <property type="project" value="UniProtKB-UniRule"/>
</dbReference>
<dbReference type="FunFam" id="3.40.1500.10:FF:000001">
    <property type="entry name" value="Oxygen-dependent coproporphyrinogen-III oxidase"/>
    <property type="match status" value="1"/>
</dbReference>
<dbReference type="Gene3D" id="3.40.1500.10">
    <property type="entry name" value="Coproporphyrinogen III oxidase, aerobic"/>
    <property type="match status" value="1"/>
</dbReference>
<dbReference type="HAMAP" id="MF_00333">
    <property type="entry name" value="Coprogen_oxidas"/>
    <property type="match status" value="1"/>
</dbReference>
<dbReference type="InterPro" id="IPR001260">
    <property type="entry name" value="Coprogen_oxidase_aer"/>
</dbReference>
<dbReference type="InterPro" id="IPR036406">
    <property type="entry name" value="Coprogen_oxidase_aer_sf"/>
</dbReference>
<dbReference type="InterPro" id="IPR018375">
    <property type="entry name" value="Coprogen_oxidase_CS"/>
</dbReference>
<dbReference type="NCBIfam" id="NF003727">
    <property type="entry name" value="PRK05330.1"/>
    <property type="match status" value="1"/>
</dbReference>
<dbReference type="PANTHER" id="PTHR10755">
    <property type="entry name" value="COPROPORPHYRINOGEN III OXIDASE, MITOCHONDRIAL"/>
    <property type="match status" value="1"/>
</dbReference>
<dbReference type="PANTHER" id="PTHR10755:SF0">
    <property type="entry name" value="OXYGEN-DEPENDENT COPROPORPHYRINOGEN-III OXIDASE, MITOCHONDRIAL"/>
    <property type="match status" value="1"/>
</dbReference>
<dbReference type="Pfam" id="PF01218">
    <property type="entry name" value="Coprogen_oxidas"/>
    <property type="match status" value="1"/>
</dbReference>
<dbReference type="PIRSF" id="PIRSF000166">
    <property type="entry name" value="Coproporphyri_ox"/>
    <property type="match status" value="1"/>
</dbReference>
<dbReference type="PRINTS" id="PR00073">
    <property type="entry name" value="COPRGNOXDASE"/>
</dbReference>
<dbReference type="SUPFAM" id="SSF102886">
    <property type="entry name" value="Coproporphyrinogen III oxidase"/>
    <property type="match status" value="1"/>
</dbReference>
<dbReference type="PROSITE" id="PS01021">
    <property type="entry name" value="COPROGEN_OXIDASE"/>
    <property type="match status" value="1"/>
</dbReference>
<sequence>MSVPDVSVVKAFLLDLQQRICDGLEQLDGEAKFKADSWKREEGGGGTSRVLTQGKVFEQAGVNFSHVTGAAMPASATAHRPELAGRSFEAMGVSLVIHPNNPYIPTTHANVRFFIAKKEGADPVWWFGGGFDLTPYYPFKEDVIEWHQNAHDLCLPFGEEVYPKYKKWCDDYFYLPHRDETRGVGGLFFDDLNAEGFDTSFAFMQAVGNGFLTAYAPIVQRRKETQYGEREREFQLYRRGRYVEFNLVYDRGTLFGLQTGGRTESILMSMPPLVRWEYMYTPEENSPESLLYSDYLTPKDWLSLNK</sequence>
<reference key="1">
    <citation type="submission" date="2008-02" db="EMBL/GenBank/DDBJ databases">
        <title>Complete sequence of Shewanella woodyi ATCC 51908.</title>
        <authorList>
            <consortium name="US DOE Joint Genome Institute"/>
            <person name="Copeland A."/>
            <person name="Lucas S."/>
            <person name="Lapidus A."/>
            <person name="Glavina del Rio T."/>
            <person name="Dalin E."/>
            <person name="Tice H."/>
            <person name="Bruce D."/>
            <person name="Goodwin L."/>
            <person name="Pitluck S."/>
            <person name="Sims D."/>
            <person name="Brettin T."/>
            <person name="Detter J.C."/>
            <person name="Han C."/>
            <person name="Kuske C.R."/>
            <person name="Schmutz J."/>
            <person name="Larimer F."/>
            <person name="Land M."/>
            <person name="Hauser L."/>
            <person name="Kyrpides N."/>
            <person name="Lykidis A."/>
            <person name="Zhao J.-S."/>
            <person name="Richardson P."/>
        </authorList>
    </citation>
    <scope>NUCLEOTIDE SEQUENCE [LARGE SCALE GENOMIC DNA]</scope>
    <source>
        <strain>ATCC 51908 / MS32</strain>
    </source>
</reference>
<gene>
    <name evidence="1" type="primary">hemF</name>
    <name type="ordered locus">Swoo_0045</name>
</gene>
<feature type="chain" id="PRO_1000119827" description="Oxygen-dependent coproporphyrinogen-III oxidase">
    <location>
        <begin position="1"/>
        <end position="306"/>
    </location>
</feature>
<feature type="region of interest" description="Important for dimerization" evidence="1">
    <location>
        <begin position="242"/>
        <end position="277"/>
    </location>
</feature>
<feature type="active site" description="Proton donor" evidence="1">
    <location>
        <position position="108"/>
    </location>
</feature>
<feature type="binding site" evidence="1">
    <location>
        <position position="94"/>
    </location>
    <ligand>
        <name>substrate</name>
    </ligand>
</feature>
<feature type="binding site" evidence="1">
    <location>
        <position position="98"/>
    </location>
    <ligand>
        <name>a divalent metal cation</name>
        <dbReference type="ChEBI" id="CHEBI:60240"/>
    </ligand>
</feature>
<feature type="binding site" evidence="1">
    <location>
        <position position="108"/>
    </location>
    <ligand>
        <name>a divalent metal cation</name>
        <dbReference type="ChEBI" id="CHEBI:60240"/>
    </ligand>
</feature>
<feature type="binding site" evidence="1">
    <location>
        <begin position="110"/>
        <end position="112"/>
    </location>
    <ligand>
        <name>substrate</name>
    </ligand>
</feature>
<feature type="binding site" evidence="1">
    <location>
        <position position="147"/>
    </location>
    <ligand>
        <name>a divalent metal cation</name>
        <dbReference type="ChEBI" id="CHEBI:60240"/>
    </ligand>
</feature>
<feature type="binding site" evidence="1">
    <location>
        <position position="177"/>
    </location>
    <ligand>
        <name>a divalent metal cation</name>
        <dbReference type="ChEBI" id="CHEBI:60240"/>
    </ligand>
</feature>
<feature type="binding site" evidence="1">
    <location>
        <begin position="260"/>
        <end position="262"/>
    </location>
    <ligand>
        <name>substrate</name>
    </ligand>
</feature>
<feature type="site" description="Important for dimerization" evidence="1">
    <location>
        <position position="177"/>
    </location>
</feature>
<protein>
    <recommendedName>
        <fullName evidence="1">Oxygen-dependent coproporphyrinogen-III oxidase</fullName>
        <shortName evidence="1">CPO</shortName>
        <shortName evidence="1">Coprogen oxidase</shortName>
        <shortName evidence="1">Coproporphyrinogenase</shortName>
        <ecNumber evidence="1">1.3.3.3</ecNumber>
    </recommendedName>
</protein>
<accession>B1KCX1</accession>
<comment type="function">
    <text evidence="1">Involved in the heme biosynthesis. Catalyzes the aerobic oxidative decarboxylation of propionate groups of rings A and B of coproporphyrinogen-III to yield the vinyl groups in protoporphyrinogen-IX.</text>
</comment>
<comment type="catalytic activity">
    <reaction evidence="1">
        <text>coproporphyrinogen III + O2 + 2 H(+) = protoporphyrinogen IX + 2 CO2 + 2 H2O</text>
        <dbReference type="Rhea" id="RHEA:18257"/>
        <dbReference type="ChEBI" id="CHEBI:15377"/>
        <dbReference type="ChEBI" id="CHEBI:15378"/>
        <dbReference type="ChEBI" id="CHEBI:15379"/>
        <dbReference type="ChEBI" id="CHEBI:16526"/>
        <dbReference type="ChEBI" id="CHEBI:57307"/>
        <dbReference type="ChEBI" id="CHEBI:57309"/>
        <dbReference type="EC" id="1.3.3.3"/>
    </reaction>
</comment>
<comment type="cofactor">
    <cofactor evidence="1">
        <name>a divalent metal cation</name>
        <dbReference type="ChEBI" id="CHEBI:60240"/>
    </cofactor>
</comment>
<comment type="pathway">
    <text evidence="1">Porphyrin-containing compound metabolism; protoporphyrin-IX biosynthesis; protoporphyrinogen-IX from coproporphyrinogen-III (O2 route): step 1/1.</text>
</comment>
<comment type="subunit">
    <text evidence="1">Homodimer.</text>
</comment>
<comment type="subcellular location">
    <subcellularLocation>
        <location evidence="1">Cytoplasm</location>
    </subcellularLocation>
</comment>
<comment type="similarity">
    <text evidence="1">Belongs to the aerobic coproporphyrinogen-III oxidase family.</text>
</comment>
<organism>
    <name type="scientific">Shewanella woodyi (strain ATCC 51908 / MS32)</name>
    <dbReference type="NCBI Taxonomy" id="392500"/>
    <lineage>
        <taxon>Bacteria</taxon>
        <taxon>Pseudomonadati</taxon>
        <taxon>Pseudomonadota</taxon>
        <taxon>Gammaproteobacteria</taxon>
        <taxon>Alteromonadales</taxon>
        <taxon>Shewanellaceae</taxon>
        <taxon>Shewanella</taxon>
    </lineage>
</organism>
<keyword id="KW-0963">Cytoplasm</keyword>
<keyword id="KW-0350">Heme biosynthesis</keyword>
<keyword id="KW-0479">Metal-binding</keyword>
<keyword id="KW-0560">Oxidoreductase</keyword>
<keyword id="KW-0627">Porphyrin biosynthesis</keyword>
<keyword id="KW-1185">Reference proteome</keyword>
<evidence type="ECO:0000255" key="1">
    <source>
        <dbReference type="HAMAP-Rule" id="MF_00333"/>
    </source>
</evidence>
<proteinExistence type="inferred from homology"/>